<keyword id="KW-0007">Acetylation</keyword>
<keyword id="KW-0903">Direct protein sequencing</keyword>
<keyword id="KW-1015">Disulfide bond</keyword>
<keyword id="KW-0249">Electron transport</keyword>
<keyword id="KW-0496">Mitochondrion</keyword>
<keyword id="KW-0676">Redox-active center</keyword>
<keyword id="KW-1185">Reference proteome</keyword>
<keyword id="KW-0809">Transit peptide</keyword>
<keyword id="KW-0813">Transport</keyword>
<evidence type="ECO:0000250" key="1">
    <source>
        <dbReference type="UniProtKB" id="P10599"/>
    </source>
</evidence>
<evidence type="ECO:0000250" key="2">
    <source>
        <dbReference type="UniProtKB" id="P97493"/>
    </source>
</evidence>
<evidence type="ECO:0000250" key="3">
    <source>
        <dbReference type="UniProtKB" id="P97615"/>
    </source>
</evidence>
<evidence type="ECO:0000250" key="4">
    <source>
        <dbReference type="UniProtKB" id="Q99757"/>
    </source>
</evidence>
<evidence type="ECO:0000255" key="5">
    <source>
        <dbReference type="PROSITE-ProRule" id="PRU00691"/>
    </source>
</evidence>
<evidence type="ECO:0000269" key="6">
    <source>
    </source>
</evidence>
<evidence type="ECO:0000305" key="7"/>
<feature type="transit peptide" description="Mitochondrion" evidence="6">
    <location>
        <begin position="1"/>
        <end position="59"/>
    </location>
</feature>
<feature type="chain" id="PRO_0000034149" description="Thioredoxin, mitochondrial">
    <location>
        <begin position="60"/>
        <end position="166"/>
    </location>
</feature>
<feature type="domain" description="Thioredoxin" evidence="5">
    <location>
        <begin position="61"/>
        <end position="166"/>
    </location>
</feature>
<feature type="active site" description="Nucleophile" evidence="1">
    <location>
        <position position="90"/>
    </location>
</feature>
<feature type="active site" description="Nucleophile" evidence="1">
    <location>
        <position position="93"/>
    </location>
</feature>
<feature type="site" description="Deprotonates C-terminal active site Cys" evidence="1">
    <location>
        <position position="84"/>
    </location>
</feature>
<feature type="site" description="Contributes to redox potential value" evidence="1">
    <location>
        <position position="91"/>
    </location>
</feature>
<feature type="site" description="Contributes to redox potential value" evidence="1">
    <location>
        <position position="92"/>
    </location>
</feature>
<feature type="modified residue" description="N6-acetyllysine; alternate" evidence="4">
    <location>
        <position position="152"/>
    </location>
</feature>
<feature type="modified residue" description="N6-succinyllysine; alternate" evidence="2">
    <location>
        <position position="152"/>
    </location>
</feature>
<feature type="disulfide bond" description="Redox-active" evidence="5">
    <location>
        <begin position="90"/>
        <end position="93"/>
    </location>
</feature>
<feature type="sequence conflict" description="In Ref. 1; BAA13447." evidence="7" ref="1">
    <original>Q</original>
    <variation>K</variation>
    <location>
        <position position="33"/>
    </location>
</feature>
<dbReference type="EMBL" id="D87741">
    <property type="protein sequence ID" value="BAA13447.1"/>
    <property type="molecule type" value="mRNA"/>
</dbReference>
<dbReference type="EMBL" id="BC112876">
    <property type="protein sequence ID" value="AAI12877.1"/>
    <property type="molecule type" value="mRNA"/>
</dbReference>
<dbReference type="RefSeq" id="NP_776633.1">
    <property type="nucleotide sequence ID" value="NM_174208.2"/>
</dbReference>
<dbReference type="SMR" id="Q95108"/>
<dbReference type="FunCoup" id="Q95108">
    <property type="interactions" value="1829"/>
</dbReference>
<dbReference type="IntAct" id="Q95108">
    <property type="interactions" value="2"/>
</dbReference>
<dbReference type="STRING" id="9913.ENSBTAP00000000014"/>
<dbReference type="PaxDb" id="9913-ENSBTAP00000000014"/>
<dbReference type="Ensembl" id="ENSBTAT00000000014.6">
    <property type="protein sequence ID" value="ENSBTAP00000000014.4"/>
    <property type="gene ID" value="ENSBTAG00000000014.6"/>
</dbReference>
<dbReference type="GeneID" id="281557"/>
<dbReference type="KEGG" id="bta:281557"/>
<dbReference type="CTD" id="25828"/>
<dbReference type="VEuPathDB" id="HostDB:ENSBTAG00000000014"/>
<dbReference type="VGNC" id="VGNC:36533">
    <property type="gene designation" value="TXN2"/>
</dbReference>
<dbReference type="eggNOG" id="KOG0910">
    <property type="taxonomic scope" value="Eukaryota"/>
</dbReference>
<dbReference type="GeneTree" id="ENSGT00530000064086"/>
<dbReference type="HOGENOM" id="CLU_090389_11_1_1"/>
<dbReference type="InParanoid" id="Q95108"/>
<dbReference type="OMA" id="VLVIMQN"/>
<dbReference type="OrthoDB" id="19690at2759"/>
<dbReference type="TreeFam" id="TF314517"/>
<dbReference type="Reactome" id="R-BTA-1614558">
    <property type="pathway name" value="Degradation of cysteine and homocysteine"/>
</dbReference>
<dbReference type="Reactome" id="R-BTA-3299685">
    <property type="pathway name" value="Detoxification of Reactive Oxygen Species"/>
</dbReference>
<dbReference type="Proteomes" id="UP000009136">
    <property type="component" value="Chromosome 5"/>
</dbReference>
<dbReference type="Bgee" id="ENSBTAG00000000014">
    <property type="expression patterns" value="Expressed in digestive system secreted substance and 104 other cell types or tissues"/>
</dbReference>
<dbReference type="GO" id="GO:0005739">
    <property type="term" value="C:mitochondrion"/>
    <property type="evidence" value="ECO:0000318"/>
    <property type="project" value="GO_Central"/>
</dbReference>
<dbReference type="GO" id="GO:0015035">
    <property type="term" value="F:protein-disulfide reductase activity"/>
    <property type="evidence" value="ECO:0007669"/>
    <property type="project" value="InterPro"/>
</dbReference>
<dbReference type="GO" id="GO:0045454">
    <property type="term" value="P:cell redox homeostasis"/>
    <property type="evidence" value="ECO:0000318"/>
    <property type="project" value="GO_Central"/>
</dbReference>
<dbReference type="CDD" id="cd02947">
    <property type="entry name" value="TRX_family"/>
    <property type="match status" value="1"/>
</dbReference>
<dbReference type="FunFam" id="3.40.30.10:FF:000001">
    <property type="entry name" value="Thioredoxin"/>
    <property type="match status" value="1"/>
</dbReference>
<dbReference type="Gene3D" id="3.40.30.10">
    <property type="entry name" value="Glutaredoxin"/>
    <property type="match status" value="1"/>
</dbReference>
<dbReference type="InterPro" id="IPR005746">
    <property type="entry name" value="Thioredoxin"/>
</dbReference>
<dbReference type="InterPro" id="IPR036249">
    <property type="entry name" value="Thioredoxin-like_sf"/>
</dbReference>
<dbReference type="InterPro" id="IPR017937">
    <property type="entry name" value="Thioredoxin_CS"/>
</dbReference>
<dbReference type="InterPro" id="IPR013766">
    <property type="entry name" value="Thioredoxin_domain"/>
</dbReference>
<dbReference type="NCBIfam" id="TIGR01068">
    <property type="entry name" value="thioredoxin"/>
    <property type="match status" value="1"/>
</dbReference>
<dbReference type="PANTHER" id="PTHR43601">
    <property type="entry name" value="THIOREDOXIN, MITOCHONDRIAL"/>
    <property type="match status" value="1"/>
</dbReference>
<dbReference type="PANTHER" id="PTHR43601:SF3">
    <property type="entry name" value="THIOREDOXIN, MITOCHONDRIAL"/>
    <property type="match status" value="1"/>
</dbReference>
<dbReference type="Pfam" id="PF00085">
    <property type="entry name" value="Thioredoxin"/>
    <property type="match status" value="1"/>
</dbReference>
<dbReference type="PRINTS" id="PR00421">
    <property type="entry name" value="THIOREDOXIN"/>
</dbReference>
<dbReference type="SUPFAM" id="SSF52833">
    <property type="entry name" value="Thioredoxin-like"/>
    <property type="match status" value="1"/>
</dbReference>
<dbReference type="PROSITE" id="PS00194">
    <property type="entry name" value="THIOREDOXIN_1"/>
    <property type="match status" value="1"/>
</dbReference>
<dbReference type="PROSITE" id="PS51352">
    <property type="entry name" value="THIOREDOXIN_2"/>
    <property type="match status" value="1"/>
</dbReference>
<reference key="1">
    <citation type="journal article" date="1997" name="Eur. J. Biochem.">
        <title>SP-22 is a thioredoxin-dependent peroxide reductase in mitochondria.</title>
        <authorList>
            <person name="Watabe S."/>
            <person name="Hiroi T."/>
            <person name="Yamamoto Y."/>
            <person name="Fujioka Y."/>
            <person name="Hasegawa H."/>
            <person name="Yago N."/>
            <person name="Takahashi S.Y."/>
        </authorList>
    </citation>
    <scope>NUCLEOTIDE SEQUENCE [MRNA]</scope>
    <scope>PROTEIN SEQUENCE OF 60-106 AND 111-166</scope>
    <source>
        <tissue>Adrenal cortex</tissue>
    </source>
</reference>
<reference key="2">
    <citation type="submission" date="2006-01" db="EMBL/GenBank/DDBJ databases">
        <authorList>
            <consortium name="NIH - Mammalian Gene Collection (MGC) project"/>
        </authorList>
    </citation>
    <scope>NUCLEOTIDE SEQUENCE [LARGE SCALE MRNA]</scope>
    <source>
        <strain>Hereford</strain>
        <tissue>Heart ventricle</tissue>
    </source>
</reference>
<sequence length="166" mass="18416">MAQRLLLRRFLTSIISGKPSQSRWAPVASRALQTPQYSPGYLTVTPSQARSIYTTRVCSTTFNIQDGPDFQDRVVNSETPVVVDFHAQWCGPCKILGPRLEKVVAKQHGKVVMAKVDIDDHTDLALEYEVSAVPTVLAMKNGDVVDKFVGIKDEDQLEAFLKKLIG</sequence>
<proteinExistence type="evidence at protein level"/>
<name>THIOM_BOVIN</name>
<accession>Q95108</accession>
<accession>Q2KHU7</accession>
<comment type="function">
    <text evidence="3 4">Important for the control of mitochondrial reactive oxygen species homeostasis, apoptosis regulation and cell viability. Is involved in various redox reactions including the reduction of protein disulfide bonds, through the reversible oxidation of its active center dithiol to a disulfide.</text>
</comment>
<comment type="subunit">
    <text evidence="4">Monomer.</text>
</comment>
<comment type="subcellular location">
    <subcellularLocation>
        <location evidence="3">Mitochondrion</location>
    </subcellularLocation>
</comment>
<comment type="similarity">
    <text evidence="7">Belongs to the thioredoxin family.</text>
</comment>
<protein>
    <recommendedName>
        <fullName>Thioredoxin, mitochondrial</fullName>
        <shortName>MTRX</shortName>
        <shortName>Mt-Trx</shortName>
    </recommendedName>
    <alternativeName>
        <fullName>Thioredoxin-2</fullName>
    </alternativeName>
</protein>
<organism>
    <name type="scientific">Bos taurus</name>
    <name type="common">Bovine</name>
    <dbReference type="NCBI Taxonomy" id="9913"/>
    <lineage>
        <taxon>Eukaryota</taxon>
        <taxon>Metazoa</taxon>
        <taxon>Chordata</taxon>
        <taxon>Craniata</taxon>
        <taxon>Vertebrata</taxon>
        <taxon>Euteleostomi</taxon>
        <taxon>Mammalia</taxon>
        <taxon>Eutheria</taxon>
        <taxon>Laurasiatheria</taxon>
        <taxon>Artiodactyla</taxon>
        <taxon>Ruminantia</taxon>
        <taxon>Pecora</taxon>
        <taxon>Bovidae</taxon>
        <taxon>Bovinae</taxon>
        <taxon>Bos</taxon>
    </lineage>
</organism>
<gene>
    <name type="primary">TXN2</name>
</gene>